<dbReference type="EMBL" id="CP000653">
    <property type="protein sequence ID" value="ABP62719.1"/>
    <property type="molecule type" value="Genomic_DNA"/>
</dbReference>
<dbReference type="RefSeq" id="WP_015961023.1">
    <property type="nucleotide sequence ID" value="NC_009436.1"/>
</dbReference>
<dbReference type="STRING" id="399742.Ent638_4064"/>
<dbReference type="KEGG" id="ent:Ent638_4064"/>
<dbReference type="eggNOG" id="ENOG502Z7ID">
    <property type="taxonomic scope" value="Bacteria"/>
</dbReference>
<dbReference type="HOGENOM" id="CLU_066437_0_0_6"/>
<dbReference type="OrthoDB" id="9790043at2"/>
<dbReference type="Proteomes" id="UP000000230">
    <property type="component" value="Chromosome"/>
</dbReference>
<dbReference type="GO" id="GO:0005886">
    <property type="term" value="C:plasma membrane"/>
    <property type="evidence" value="ECO:0007669"/>
    <property type="project" value="UniProtKB-SubCell"/>
</dbReference>
<dbReference type="GO" id="GO:0015153">
    <property type="term" value="F:rhamnose transmembrane transporter activity"/>
    <property type="evidence" value="ECO:0007669"/>
    <property type="project" value="UniProtKB-UniRule"/>
</dbReference>
<dbReference type="GO" id="GO:0015293">
    <property type="term" value="F:symporter activity"/>
    <property type="evidence" value="ECO:0007669"/>
    <property type="project" value="UniProtKB-KW"/>
</dbReference>
<dbReference type="HAMAP" id="MF_01532">
    <property type="entry name" value="RhaT"/>
    <property type="match status" value="1"/>
</dbReference>
<dbReference type="InterPro" id="IPR004673">
    <property type="entry name" value="L-rhamnose-proton_sym_RhaT"/>
</dbReference>
<dbReference type="NCBIfam" id="NF010021">
    <property type="entry name" value="PRK13499.1-1"/>
    <property type="match status" value="1"/>
</dbReference>
<dbReference type="NCBIfam" id="NF010023">
    <property type="entry name" value="PRK13499.1-3"/>
    <property type="match status" value="1"/>
</dbReference>
<dbReference type="NCBIfam" id="TIGR00776">
    <property type="entry name" value="RhaT"/>
    <property type="match status" value="1"/>
</dbReference>
<dbReference type="Pfam" id="PF06379">
    <property type="entry name" value="RhaT"/>
    <property type="match status" value="1"/>
</dbReference>
<name>RHAT_ENT38</name>
<proteinExistence type="inferred from homology"/>
<keyword id="KW-0997">Cell inner membrane</keyword>
<keyword id="KW-1003">Cell membrane</keyword>
<keyword id="KW-0472">Membrane</keyword>
<keyword id="KW-0762">Sugar transport</keyword>
<keyword id="KW-0769">Symport</keyword>
<keyword id="KW-0812">Transmembrane</keyword>
<keyword id="KW-1133">Transmembrane helix</keyword>
<keyword id="KW-0813">Transport</keyword>
<feature type="chain" id="PRO_1000068692" description="L-rhamnose-proton symporter">
    <location>
        <begin position="1"/>
        <end position="344"/>
    </location>
</feature>
<feature type="transmembrane region" description="Helical" evidence="1">
    <location>
        <begin position="4"/>
        <end position="24"/>
    </location>
</feature>
<feature type="transmembrane region" description="Helical" evidence="1">
    <location>
        <begin position="38"/>
        <end position="58"/>
    </location>
</feature>
<feature type="transmembrane region" description="Helical" evidence="1">
    <location>
        <begin position="72"/>
        <end position="92"/>
    </location>
</feature>
<feature type="transmembrane region" description="Helical" evidence="1">
    <location>
        <begin position="101"/>
        <end position="121"/>
    </location>
</feature>
<feature type="transmembrane region" description="Helical" evidence="1">
    <location>
        <begin position="137"/>
        <end position="157"/>
    </location>
</feature>
<feature type="transmembrane region" description="Helical" evidence="1">
    <location>
        <begin position="175"/>
        <end position="195"/>
    </location>
</feature>
<feature type="transmembrane region" description="Helical" evidence="1">
    <location>
        <begin position="214"/>
        <end position="234"/>
    </location>
</feature>
<feature type="transmembrane region" description="Helical" evidence="1">
    <location>
        <begin position="259"/>
        <end position="279"/>
    </location>
</feature>
<feature type="transmembrane region" description="Helical" evidence="1">
    <location>
        <begin position="290"/>
        <end position="310"/>
    </location>
</feature>
<feature type="transmembrane region" description="Helical" evidence="1">
    <location>
        <begin position="321"/>
        <end position="341"/>
    </location>
</feature>
<evidence type="ECO:0000255" key="1">
    <source>
        <dbReference type="HAMAP-Rule" id="MF_01532"/>
    </source>
</evidence>
<gene>
    <name evidence="1" type="primary">rhaT</name>
    <name type="ordered locus">Ent638_4064</name>
</gene>
<comment type="function">
    <text evidence="1">Uptake of L-rhamnose across the cytoplasmic membrane with the concomitant transport of protons into the cell (symport system).</text>
</comment>
<comment type="catalytic activity">
    <reaction evidence="1">
        <text>L-rhamnopyranose(in) + H(+)(in) = L-rhamnopyranose(out) + H(+)(out)</text>
        <dbReference type="Rhea" id="RHEA:29947"/>
        <dbReference type="ChEBI" id="CHEBI:15378"/>
        <dbReference type="ChEBI" id="CHEBI:62346"/>
    </reaction>
    <physiologicalReaction direction="right-to-left" evidence="1">
        <dbReference type="Rhea" id="RHEA:29949"/>
    </physiologicalReaction>
</comment>
<comment type="subcellular location">
    <subcellularLocation>
        <location evidence="1">Cell inner membrane</location>
        <topology evidence="1">Multi-pass membrane protein</topology>
    </subcellularLocation>
</comment>
<comment type="similarity">
    <text evidence="1">Belongs to the L-rhamnose transporter (TC 2.A.7.6) family.</text>
</comment>
<sequence length="344" mass="37172">MNHAITMGIFWHLIGAASAACFYAPFKKVKHWSWETMWSVGGTVSWLILPWTISAILLPDFWAYFTSFNASTLLPVFLFGAMWGIGNINYGLTMRYLGMSMGIGIAIGITLIVGTLMTPILNGNFDVLINTHGGRMTLLGVLVAVIGVGIVTRAGQLKERKMGITAEDFNLRKGLVLAVMCGIFSAGMSFAMNAAKPMHEAAAALGVDPLYVALPSYVVIMGGGALVNLGFCFIRLAKVKNLSVKADFSLAKPLIVTNVLLSALGGLMWYLQFFFYAWGHASIPSQYDYMSWMLHMSFYVLCGGMVGLVLKEWNNAGRRPVGVLSLGCVVIIIAANIVGLGMAS</sequence>
<organism>
    <name type="scientific">Enterobacter sp. (strain 638)</name>
    <dbReference type="NCBI Taxonomy" id="399742"/>
    <lineage>
        <taxon>Bacteria</taxon>
        <taxon>Pseudomonadati</taxon>
        <taxon>Pseudomonadota</taxon>
        <taxon>Gammaproteobacteria</taxon>
        <taxon>Enterobacterales</taxon>
        <taxon>Enterobacteriaceae</taxon>
        <taxon>Enterobacter</taxon>
    </lineage>
</organism>
<protein>
    <recommendedName>
        <fullName evidence="1">L-rhamnose-proton symporter</fullName>
    </recommendedName>
    <alternativeName>
        <fullName evidence="1">L-rhamnose-H(+) transport protein</fullName>
    </alternativeName>
</protein>
<reference key="1">
    <citation type="journal article" date="2010" name="PLoS Genet.">
        <title>Genome sequence of the plant growth promoting endophytic bacterium Enterobacter sp. 638.</title>
        <authorList>
            <person name="Taghavi S."/>
            <person name="van der Lelie D."/>
            <person name="Hoffman A."/>
            <person name="Zhang Y.B."/>
            <person name="Walla M.D."/>
            <person name="Vangronsveld J."/>
            <person name="Newman L."/>
            <person name="Monchy S."/>
        </authorList>
    </citation>
    <scope>NUCLEOTIDE SEQUENCE [LARGE SCALE GENOMIC DNA]</scope>
    <source>
        <strain>638</strain>
    </source>
</reference>
<accession>A4WG89</accession>